<feature type="chain" id="PRO_0000229163" description="tRNA (guanine-N(7)-)-methyltransferase">
    <location>
        <begin position="1"/>
        <end position="246"/>
    </location>
</feature>
<feature type="region of interest" description="Interaction with RNA" evidence="2">
    <location>
        <begin position="157"/>
        <end position="162"/>
    </location>
</feature>
<feature type="active site" evidence="1">
    <location>
        <position position="151"/>
    </location>
</feature>
<feature type="binding site" evidence="2">
    <location>
        <position position="76"/>
    </location>
    <ligand>
        <name>S-adenosyl-L-methionine</name>
        <dbReference type="ChEBI" id="CHEBI:59789"/>
    </ligand>
</feature>
<feature type="binding site" evidence="2">
    <location>
        <position position="101"/>
    </location>
    <ligand>
        <name>S-adenosyl-L-methionine</name>
        <dbReference type="ChEBI" id="CHEBI:59789"/>
    </ligand>
</feature>
<feature type="binding site" evidence="2">
    <location>
        <position position="128"/>
    </location>
    <ligand>
        <name>S-adenosyl-L-methionine</name>
        <dbReference type="ChEBI" id="CHEBI:59789"/>
    </ligand>
</feature>
<feature type="binding site" evidence="2">
    <location>
        <position position="151"/>
    </location>
    <ligand>
        <name>S-adenosyl-L-methionine</name>
        <dbReference type="ChEBI" id="CHEBI:59789"/>
    </ligand>
</feature>
<feature type="binding site" evidence="2">
    <location>
        <position position="155"/>
    </location>
    <ligand>
        <name>substrate</name>
    </ligand>
</feature>
<feature type="binding site" evidence="2">
    <location>
        <position position="187"/>
    </location>
    <ligand>
        <name>substrate</name>
    </ligand>
</feature>
<feature type="binding site" evidence="2">
    <location>
        <begin position="222"/>
        <end position="225"/>
    </location>
    <ligand>
        <name>substrate</name>
    </ligand>
</feature>
<comment type="function">
    <text evidence="2">Catalyzes the formation of N(7)-methylguanine at position 46 (m7G46) in tRNA.</text>
</comment>
<comment type="catalytic activity">
    <reaction evidence="2">
        <text>guanosine(46) in tRNA + S-adenosyl-L-methionine = N(7)-methylguanosine(46) in tRNA + S-adenosyl-L-homocysteine</text>
        <dbReference type="Rhea" id="RHEA:42708"/>
        <dbReference type="Rhea" id="RHEA-COMP:10188"/>
        <dbReference type="Rhea" id="RHEA-COMP:10189"/>
        <dbReference type="ChEBI" id="CHEBI:57856"/>
        <dbReference type="ChEBI" id="CHEBI:59789"/>
        <dbReference type="ChEBI" id="CHEBI:74269"/>
        <dbReference type="ChEBI" id="CHEBI:74480"/>
        <dbReference type="EC" id="2.1.1.33"/>
    </reaction>
</comment>
<comment type="pathway">
    <text evidence="2">tRNA modification; N(7)-methylguanine-tRNA biosynthesis.</text>
</comment>
<comment type="similarity">
    <text evidence="2">Belongs to the class I-like SAM-binding methyltransferase superfamily. TrmB family.</text>
</comment>
<proteinExistence type="inferred from homology"/>
<evidence type="ECO:0000250" key="1"/>
<evidence type="ECO:0000255" key="2">
    <source>
        <dbReference type="HAMAP-Rule" id="MF_01057"/>
    </source>
</evidence>
<organism>
    <name type="scientific">Dechloromonas aromatica (strain RCB)</name>
    <dbReference type="NCBI Taxonomy" id="159087"/>
    <lineage>
        <taxon>Bacteria</taxon>
        <taxon>Pseudomonadati</taxon>
        <taxon>Pseudomonadota</taxon>
        <taxon>Betaproteobacteria</taxon>
        <taxon>Rhodocyclales</taxon>
        <taxon>Azonexaceae</taxon>
        <taxon>Dechloromonas</taxon>
    </lineage>
</organism>
<accession>Q478Z3</accession>
<reference key="1">
    <citation type="journal article" date="2009" name="BMC Genomics">
        <title>Metabolic analysis of the soil microbe Dechloromonas aromatica str. RCB: indications of a surprisingly complex life-style and cryptic anaerobic pathways for aromatic degradation.</title>
        <authorList>
            <person name="Salinero K.K."/>
            <person name="Keller K."/>
            <person name="Feil W.S."/>
            <person name="Feil H."/>
            <person name="Trong S."/>
            <person name="Di Bartolo G."/>
            <person name="Lapidus A."/>
        </authorList>
    </citation>
    <scope>NUCLEOTIDE SEQUENCE [LARGE SCALE GENOMIC DNA]</scope>
    <source>
        <strain>RCB</strain>
    </source>
</reference>
<protein>
    <recommendedName>
        <fullName evidence="2">tRNA (guanine-N(7)-)-methyltransferase</fullName>
        <ecNumber evidence="2">2.1.1.33</ecNumber>
    </recommendedName>
    <alternativeName>
        <fullName evidence="2">tRNA (guanine(46)-N(7))-methyltransferase</fullName>
    </alternativeName>
    <alternativeName>
        <fullName evidence="2">tRNA(m7G46)-methyltransferase</fullName>
    </alternativeName>
</protein>
<dbReference type="EC" id="2.1.1.33" evidence="2"/>
<dbReference type="EMBL" id="CP000089">
    <property type="protein sequence ID" value="AAZ48588.1"/>
    <property type="molecule type" value="Genomic_DNA"/>
</dbReference>
<dbReference type="SMR" id="Q478Z3"/>
<dbReference type="STRING" id="159087.Daro_3860"/>
<dbReference type="KEGG" id="dar:Daro_3860"/>
<dbReference type="eggNOG" id="COG0220">
    <property type="taxonomic scope" value="Bacteria"/>
</dbReference>
<dbReference type="HOGENOM" id="CLU_050910_0_1_4"/>
<dbReference type="OrthoDB" id="9802090at2"/>
<dbReference type="UniPathway" id="UPA00989"/>
<dbReference type="GO" id="GO:0043527">
    <property type="term" value="C:tRNA methyltransferase complex"/>
    <property type="evidence" value="ECO:0007669"/>
    <property type="project" value="TreeGrafter"/>
</dbReference>
<dbReference type="GO" id="GO:0008176">
    <property type="term" value="F:tRNA (guanine(46)-N7)-methyltransferase activity"/>
    <property type="evidence" value="ECO:0007669"/>
    <property type="project" value="UniProtKB-UniRule"/>
</dbReference>
<dbReference type="CDD" id="cd02440">
    <property type="entry name" value="AdoMet_MTases"/>
    <property type="match status" value="1"/>
</dbReference>
<dbReference type="FunFam" id="3.40.50.150:FF:000035">
    <property type="entry name" value="tRNA (guanine-N(7)-)-methyltransferase"/>
    <property type="match status" value="1"/>
</dbReference>
<dbReference type="Gene3D" id="3.40.50.150">
    <property type="entry name" value="Vaccinia Virus protein VP39"/>
    <property type="match status" value="1"/>
</dbReference>
<dbReference type="HAMAP" id="MF_01057">
    <property type="entry name" value="tRNA_methyltr_TrmB"/>
    <property type="match status" value="1"/>
</dbReference>
<dbReference type="InterPro" id="IPR029063">
    <property type="entry name" value="SAM-dependent_MTases_sf"/>
</dbReference>
<dbReference type="InterPro" id="IPR003358">
    <property type="entry name" value="tRNA_(Gua-N-7)_MeTrfase_Trmb"/>
</dbReference>
<dbReference type="InterPro" id="IPR055361">
    <property type="entry name" value="tRNA_methyltr_TrmB_bact"/>
</dbReference>
<dbReference type="NCBIfam" id="TIGR00091">
    <property type="entry name" value="tRNA (guanosine(46)-N7)-methyltransferase TrmB"/>
    <property type="match status" value="1"/>
</dbReference>
<dbReference type="PANTHER" id="PTHR23417">
    <property type="entry name" value="3-DEOXY-D-MANNO-OCTULOSONIC-ACID TRANSFERASE/TRNA GUANINE-N 7 - -METHYLTRANSFERASE"/>
    <property type="match status" value="1"/>
</dbReference>
<dbReference type="PANTHER" id="PTHR23417:SF14">
    <property type="entry name" value="PENTACOTRIPEPTIDE-REPEAT REGION OF PRORP DOMAIN-CONTAINING PROTEIN"/>
    <property type="match status" value="1"/>
</dbReference>
<dbReference type="Pfam" id="PF02390">
    <property type="entry name" value="Methyltransf_4"/>
    <property type="match status" value="1"/>
</dbReference>
<dbReference type="SUPFAM" id="SSF53335">
    <property type="entry name" value="S-adenosyl-L-methionine-dependent methyltransferases"/>
    <property type="match status" value="1"/>
</dbReference>
<dbReference type="PROSITE" id="PS51625">
    <property type="entry name" value="SAM_MT_TRMB"/>
    <property type="match status" value="1"/>
</dbReference>
<name>TRMB_DECAR</name>
<gene>
    <name evidence="2" type="primary">trmB</name>
    <name type="ordered locus">Daro_3860</name>
</gene>
<keyword id="KW-0489">Methyltransferase</keyword>
<keyword id="KW-0949">S-adenosyl-L-methionine</keyword>
<keyword id="KW-0808">Transferase</keyword>
<keyword id="KW-0819">tRNA processing</keyword>
<sequence>MSDTPLIQPANVGEGVYEEGREGYGHIKSYVRRAGRMSSAQENYYAEMMPKIGLVYASQPIDLAAFFGRNNPKVLEIGTGMGETTAKIADANRDIDYLGVEVHVPGVGALCKQIAERELTNLRICQHDAVEVVRDMLPEDSLDGVHVFFPDPWHKARHNKRRLIQSPFVALLASRLKPGGYFHCATDWEEYAHQMLEVLSGEPTLVNSSEGFAPRPDYRPLTKFENRGLRLGHGVWDVIFRKKQLA</sequence>